<protein>
    <recommendedName>
        <fullName evidence="1">Lipid-A-disaccharide synthase</fullName>
        <ecNumber evidence="1">2.4.1.182</ecNumber>
    </recommendedName>
</protein>
<evidence type="ECO:0000255" key="1">
    <source>
        <dbReference type="HAMAP-Rule" id="MF_00392"/>
    </source>
</evidence>
<organism>
    <name type="scientific">Azoarcus sp. (strain BH72)</name>
    <dbReference type="NCBI Taxonomy" id="418699"/>
    <lineage>
        <taxon>Bacteria</taxon>
        <taxon>Pseudomonadati</taxon>
        <taxon>Pseudomonadota</taxon>
        <taxon>Betaproteobacteria</taxon>
        <taxon>Rhodocyclales</taxon>
        <taxon>Zoogloeaceae</taxon>
        <taxon>Azoarcus</taxon>
    </lineage>
</organism>
<dbReference type="EC" id="2.4.1.182" evidence="1"/>
<dbReference type="EMBL" id="AM406670">
    <property type="protein sequence ID" value="CAL94513.1"/>
    <property type="molecule type" value="Genomic_DNA"/>
</dbReference>
<dbReference type="RefSeq" id="WP_011765629.1">
    <property type="nucleotide sequence ID" value="NC_008702.1"/>
</dbReference>
<dbReference type="SMR" id="A1K6Q8"/>
<dbReference type="STRING" id="62928.azo1896"/>
<dbReference type="CAZy" id="GT19">
    <property type="family name" value="Glycosyltransferase Family 19"/>
</dbReference>
<dbReference type="KEGG" id="aoa:dqs_2051"/>
<dbReference type="KEGG" id="azo:azo1896"/>
<dbReference type="eggNOG" id="COG0763">
    <property type="taxonomic scope" value="Bacteria"/>
</dbReference>
<dbReference type="HOGENOM" id="CLU_036577_3_0_4"/>
<dbReference type="OrthoDB" id="9801642at2"/>
<dbReference type="UniPathway" id="UPA00973"/>
<dbReference type="Proteomes" id="UP000002588">
    <property type="component" value="Chromosome"/>
</dbReference>
<dbReference type="GO" id="GO:0016020">
    <property type="term" value="C:membrane"/>
    <property type="evidence" value="ECO:0007669"/>
    <property type="project" value="GOC"/>
</dbReference>
<dbReference type="GO" id="GO:0008915">
    <property type="term" value="F:lipid-A-disaccharide synthase activity"/>
    <property type="evidence" value="ECO:0007669"/>
    <property type="project" value="UniProtKB-UniRule"/>
</dbReference>
<dbReference type="GO" id="GO:0005543">
    <property type="term" value="F:phospholipid binding"/>
    <property type="evidence" value="ECO:0007669"/>
    <property type="project" value="TreeGrafter"/>
</dbReference>
<dbReference type="GO" id="GO:0009245">
    <property type="term" value="P:lipid A biosynthetic process"/>
    <property type="evidence" value="ECO:0007669"/>
    <property type="project" value="UniProtKB-UniRule"/>
</dbReference>
<dbReference type="Gene3D" id="3.40.50.2000">
    <property type="entry name" value="Glycogen Phosphorylase B"/>
    <property type="match status" value="1"/>
</dbReference>
<dbReference type="HAMAP" id="MF_00392">
    <property type="entry name" value="LpxB"/>
    <property type="match status" value="1"/>
</dbReference>
<dbReference type="InterPro" id="IPR003835">
    <property type="entry name" value="Glyco_trans_19"/>
</dbReference>
<dbReference type="NCBIfam" id="TIGR00215">
    <property type="entry name" value="lpxB"/>
    <property type="match status" value="1"/>
</dbReference>
<dbReference type="PANTHER" id="PTHR30372">
    <property type="entry name" value="LIPID-A-DISACCHARIDE SYNTHASE"/>
    <property type="match status" value="1"/>
</dbReference>
<dbReference type="PANTHER" id="PTHR30372:SF4">
    <property type="entry name" value="LIPID-A-DISACCHARIDE SYNTHASE, MITOCHONDRIAL-RELATED"/>
    <property type="match status" value="1"/>
</dbReference>
<dbReference type="Pfam" id="PF02684">
    <property type="entry name" value="LpxB"/>
    <property type="match status" value="1"/>
</dbReference>
<dbReference type="SUPFAM" id="SSF53756">
    <property type="entry name" value="UDP-Glycosyltransferase/glycogen phosphorylase"/>
    <property type="match status" value="1"/>
</dbReference>
<gene>
    <name evidence="1" type="primary">lpxB</name>
    <name type="ordered locus">azo1896</name>
</gene>
<accession>A1K6Q8</accession>
<comment type="function">
    <text evidence="1">Condensation of UDP-2,3-diacylglucosamine and 2,3-diacylglucosamine-1-phosphate to form lipid A disaccharide, a precursor of lipid A, a phosphorylated glycolipid that anchors the lipopolysaccharide to the outer membrane of the cell.</text>
</comment>
<comment type="catalytic activity">
    <reaction evidence="1">
        <text>a lipid X + a UDP-2-N,3-O-bis[(3R)-3-hydroxyacyl]-alpha-D-glucosamine = a lipid A disaccharide + UDP + H(+)</text>
        <dbReference type="Rhea" id="RHEA:67828"/>
        <dbReference type="ChEBI" id="CHEBI:15378"/>
        <dbReference type="ChEBI" id="CHEBI:58223"/>
        <dbReference type="ChEBI" id="CHEBI:137748"/>
        <dbReference type="ChEBI" id="CHEBI:176338"/>
        <dbReference type="ChEBI" id="CHEBI:176343"/>
        <dbReference type="EC" id="2.4.1.182"/>
    </reaction>
</comment>
<comment type="pathway">
    <text evidence="1">Bacterial outer membrane biogenesis; LPS lipid A biosynthesis.</text>
</comment>
<comment type="similarity">
    <text evidence="1">Belongs to the LpxB family.</text>
</comment>
<sequence length="391" mass="43154">MAPRIAMVAGEASGDLLASHLIRAIRARVPDAEFFGIGGPKMQAEGFDARWPCELLAVHGYVDALKRYRELSGIRKKLLKQVRRERPDAFIGVDAPDFNLWLEGKIKAAGIPAIHFVSPSIWAWRGGRIKRIARSVTRMLCMFPFEPELYERAGVPVSYVGHPLADVFPLEPDRAAARERLDIAPERKVVALLPGSRQSEVRNLGELFIETAAMLAQRHPDVLFLVPLATRETRELFSAALARNKGDELPLRMLFGHAVDAMTAADAVLVASGTASLEAALLKRPMVITYRMGKWQYRLMKRMAYLPWIGLPNILCREGLVPELVQDDATPPKLADALERWLVDPAACAALTERFTALHHSLRQNTAEKAAAAVLPYLSSSASCQPVSVSA</sequence>
<reference key="1">
    <citation type="journal article" date="2006" name="Nat. Biotechnol.">
        <title>Complete genome of the mutualistic, N2-fixing grass endophyte Azoarcus sp. strain BH72.</title>
        <authorList>
            <person name="Krause A."/>
            <person name="Ramakumar A."/>
            <person name="Bartels D."/>
            <person name="Battistoni F."/>
            <person name="Bekel T."/>
            <person name="Boch J."/>
            <person name="Boehm M."/>
            <person name="Friedrich F."/>
            <person name="Hurek T."/>
            <person name="Krause L."/>
            <person name="Linke B."/>
            <person name="McHardy A.C."/>
            <person name="Sarkar A."/>
            <person name="Schneiker S."/>
            <person name="Syed A.A."/>
            <person name="Thauer R."/>
            <person name="Vorhoelter F.-J."/>
            <person name="Weidner S."/>
            <person name="Puehler A."/>
            <person name="Reinhold-Hurek B."/>
            <person name="Kaiser O."/>
            <person name="Goesmann A."/>
        </authorList>
    </citation>
    <scope>NUCLEOTIDE SEQUENCE [LARGE SCALE GENOMIC DNA]</scope>
    <source>
        <strain>BH72</strain>
    </source>
</reference>
<keyword id="KW-0328">Glycosyltransferase</keyword>
<keyword id="KW-0441">Lipid A biosynthesis</keyword>
<keyword id="KW-0444">Lipid biosynthesis</keyword>
<keyword id="KW-0443">Lipid metabolism</keyword>
<keyword id="KW-1185">Reference proteome</keyword>
<keyword id="KW-0808">Transferase</keyword>
<proteinExistence type="inferred from homology"/>
<name>LPXB_AZOSB</name>
<feature type="chain" id="PRO_1000049384" description="Lipid-A-disaccharide synthase">
    <location>
        <begin position="1"/>
        <end position="391"/>
    </location>
</feature>